<feature type="signal peptide" evidence="4">
    <location>
        <begin position="1"/>
        <end position="20"/>
    </location>
</feature>
<feature type="propeptide" id="PRO_0000329308" evidence="1">
    <location>
        <begin position="21"/>
        <end position="187"/>
    </location>
</feature>
<feature type="chain" id="PRO_0000235852" description="Snake venom metalloproteinase aculysin-2">
    <location>
        <begin position="188"/>
        <end position="389"/>
    </location>
</feature>
<feature type="propeptide" id="PRO_0000329309" evidence="1">
    <location>
        <begin position="390"/>
        <end position="414"/>
    </location>
</feature>
<feature type="chain" id="PRO_0000329310" description="Disintegrin acugrin">
    <location>
        <begin position="415"/>
        <end position="479"/>
    </location>
</feature>
<feature type="domain" description="Peptidase M12B" evidence="6">
    <location>
        <begin position="193"/>
        <end position="390"/>
    </location>
</feature>
<feature type="domain" description="Disintegrin" evidence="5">
    <location>
        <begin position="398"/>
        <end position="479"/>
    </location>
</feature>
<feature type="short sequence motif" description="Cell attachment site">
    <location>
        <begin position="457"/>
        <end position="459"/>
    </location>
</feature>
<feature type="active site" evidence="3 6">
    <location>
        <position position="330"/>
    </location>
</feature>
<feature type="binding site" evidence="1">
    <location>
        <position position="196"/>
    </location>
    <ligand>
        <name>Ca(2+)</name>
        <dbReference type="ChEBI" id="CHEBI:29108"/>
    </ligand>
</feature>
<feature type="binding site" evidence="1">
    <location>
        <position position="280"/>
    </location>
    <ligand>
        <name>Ca(2+)</name>
        <dbReference type="ChEBI" id="CHEBI:29108"/>
    </ligand>
</feature>
<feature type="binding site" evidence="6">
    <location>
        <position position="329"/>
    </location>
    <ligand>
        <name>Zn(2+)</name>
        <dbReference type="ChEBI" id="CHEBI:29105"/>
        <note>catalytic</note>
    </ligand>
</feature>
<feature type="binding site" evidence="6">
    <location>
        <position position="333"/>
    </location>
    <ligand>
        <name>Zn(2+)</name>
        <dbReference type="ChEBI" id="CHEBI:29105"/>
        <note>catalytic</note>
    </ligand>
</feature>
<feature type="binding site" evidence="6">
    <location>
        <position position="339"/>
    </location>
    <ligand>
        <name>Zn(2+)</name>
        <dbReference type="ChEBI" id="CHEBI:29105"/>
        <note>catalytic</note>
    </ligand>
</feature>
<feature type="binding site" evidence="1">
    <location>
        <position position="385"/>
    </location>
    <ligand>
        <name>Ca(2+)</name>
        <dbReference type="ChEBI" id="CHEBI:29108"/>
    </ligand>
</feature>
<feature type="binding site" evidence="1">
    <location>
        <position position="388"/>
    </location>
    <ligand>
        <name>Ca(2+)</name>
        <dbReference type="ChEBI" id="CHEBI:29108"/>
    </ligand>
</feature>
<feature type="disulfide bond" evidence="6">
    <location>
        <begin position="304"/>
        <end position="385"/>
    </location>
</feature>
<feature type="disulfide bond" evidence="6">
    <location>
        <begin position="344"/>
        <end position="369"/>
    </location>
</feature>
<feature type="disulfide bond" evidence="6">
    <location>
        <begin position="346"/>
        <end position="352"/>
    </location>
</feature>
<feature type="disulfide bond" evidence="2">
    <location>
        <begin position="435"/>
        <end position="441"/>
    </location>
</feature>
<feature type="disulfide bond" evidence="2">
    <location>
        <begin position="440"/>
        <end position="465"/>
    </location>
</feature>
<feature type="disulfide bond" evidence="2 5">
    <location>
        <begin position="453"/>
        <end position="472"/>
    </location>
</feature>
<feature type="sequence conflict" description="In Ref. 2; AAD45801 and 3; AAF61188." evidence="8" ref="2 3">
    <original>E</original>
    <variation>A</variation>
    <location>
        <position position="32"/>
    </location>
</feature>
<feature type="sequence conflict" description="In Ref. 3; AAF61188." evidence="8" ref="3">
    <original>I</original>
    <variation>L</variation>
    <location>
        <position position="143"/>
    </location>
</feature>
<feature type="sequence conflict" description="In Ref. 2; AAD45801 and 3; AAF61188." evidence="8" ref="2 3">
    <original>Y</original>
    <variation>F</variation>
    <location>
        <position position="152"/>
    </location>
</feature>
<feature type="sequence conflict" description="In Ref. 2; AAD45801." evidence="8" ref="2">
    <original>R</original>
    <variation>S</variation>
    <location>
        <position position="193"/>
    </location>
</feature>
<feature type="sequence conflict" description="In Ref. 2; AAD45801." evidence="8" ref="2">
    <original>Y</original>
    <variation>F</variation>
    <location>
        <position position="209"/>
    </location>
</feature>
<feature type="sequence conflict" description="In Ref. 2; AAD45801." evidence="8" ref="2">
    <original>M</original>
    <variation>L</variation>
    <location>
        <position position="223"/>
    </location>
</feature>
<comment type="function">
    <molecule>Snake venom metalloproteinase aculysin-2</molecule>
    <text evidence="1">Snake venom metalloproteinase that impairs hemostasis in the envenomed animal.</text>
</comment>
<comment type="function">
    <molecule>Disintegrin acugrin</molecule>
    <text evidence="1">Inhibits platelet aggregation induced by ADP, thrombin, platelet-activating factor and collagen. Acts by inhibiting fibrinogen interaction with platelet receptors GPIIb/GPIIIa (ITGA2B/ITGB3) (By similarity).</text>
</comment>
<comment type="cofactor">
    <cofactor evidence="3">
        <name>Zn(2+)</name>
        <dbReference type="ChEBI" id="CHEBI:29105"/>
    </cofactor>
    <text evidence="3">Binds 1 zinc ion per subunit.</text>
</comment>
<comment type="subunit">
    <text evidence="3">Monomer.</text>
</comment>
<comment type="subcellular location">
    <subcellularLocation>
        <location evidence="1">Secreted</location>
    </subcellularLocation>
</comment>
<comment type="tissue specificity">
    <text>Expressed by the venom gland.</text>
</comment>
<comment type="mass spectrometry">
    <molecule>Snake venom metalloproteinase aculysin-2</molecule>
</comment>
<comment type="miscellaneous">
    <text>The disintegrin belongs to the medium disintegrin subfamily.</text>
</comment>
<comment type="similarity">
    <text evidence="8">Belongs to the venom metalloproteinase (M12B) family. P-II subfamily. P-IIa sub-subfamily.</text>
</comment>
<dbReference type="EC" id="3.4.24.-"/>
<dbReference type="EMBL" id="AJ223283">
    <property type="protein sequence ID" value="CAB46430.1"/>
    <property type="molecule type" value="mRNA"/>
</dbReference>
<dbReference type="EMBL" id="AF162086">
    <property type="protein sequence ID" value="AAD45801.1"/>
    <property type="molecule type" value="mRNA"/>
</dbReference>
<dbReference type="EMBL" id="AF117636">
    <property type="protein sequence ID" value="AAF61188.1"/>
    <property type="molecule type" value="mRNA"/>
</dbReference>
<dbReference type="EMBL" id="AJ131345">
    <property type="protein sequence ID" value="CAA10353.1"/>
    <property type="molecule type" value="mRNA"/>
</dbReference>
<dbReference type="SMR" id="Q9PWJ0"/>
<dbReference type="MEROPS" id="M12.131"/>
<dbReference type="GO" id="GO:0005576">
    <property type="term" value="C:extracellular region"/>
    <property type="evidence" value="ECO:0000250"/>
    <property type="project" value="UniProtKB"/>
</dbReference>
<dbReference type="GO" id="GO:0005886">
    <property type="term" value="C:plasma membrane"/>
    <property type="evidence" value="ECO:0007669"/>
    <property type="project" value="TreeGrafter"/>
</dbReference>
<dbReference type="GO" id="GO:0005509">
    <property type="term" value="F:calcium ion binding"/>
    <property type="evidence" value="ECO:0000250"/>
    <property type="project" value="UniProtKB"/>
</dbReference>
<dbReference type="GO" id="GO:0004222">
    <property type="term" value="F:metalloendopeptidase activity"/>
    <property type="evidence" value="ECO:0007669"/>
    <property type="project" value="InterPro"/>
</dbReference>
<dbReference type="GO" id="GO:0090729">
    <property type="term" value="F:toxin activity"/>
    <property type="evidence" value="ECO:0007669"/>
    <property type="project" value="UniProtKB-KW"/>
</dbReference>
<dbReference type="GO" id="GO:0008270">
    <property type="term" value="F:zinc ion binding"/>
    <property type="evidence" value="ECO:0000250"/>
    <property type="project" value="UniProtKB"/>
</dbReference>
<dbReference type="GO" id="GO:0006508">
    <property type="term" value="P:proteolysis"/>
    <property type="evidence" value="ECO:0007669"/>
    <property type="project" value="UniProtKB-KW"/>
</dbReference>
<dbReference type="CDD" id="cd04269">
    <property type="entry name" value="ZnMc_adamalysin_II_like"/>
    <property type="match status" value="1"/>
</dbReference>
<dbReference type="FunFam" id="3.40.390.10:FF:000002">
    <property type="entry name" value="Disintegrin and metalloproteinase domain-containing protein 22"/>
    <property type="match status" value="1"/>
</dbReference>
<dbReference type="Gene3D" id="3.40.390.10">
    <property type="entry name" value="Collagenase (Catalytic Domain)"/>
    <property type="match status" value="1"/>
</dbReference>
<dbReference type="Gene3D" id="4.10.70.10">
    <property type="entry name" value="Disintegrin domain"/>
    <property type="match status" value="1"/>
</dbReference>
<dbReference type="InterPro" id="IPR001762">
    <property type="entry name" value="Disintegrin_dom"/>
</dbReference>
<dbReference type="InterPro" id="IPR036436">
    <property type="entry name" value="Disintegrin_dom_sf"/>
</dbReference>
<dbReference type="InterPro" id="IPR024079">
    <property type="entry name" value="MetalloPept_cat_dom_sf"/>
</dbReference>
<dbReference type="InterPro" id="IPR001590">
    <property type="entry name" value="Peptidase_M12B"/>
</dbReference>
<dbReference type="InterPro" id="IPR002870">
    <property type="entry name" value="Peptidase_M12B_N"/>
</dbReference>
<dbReference type="InterPro" id="IPR034027">
    <property type="entry name" value="Reprolysin_adamalysin"/>
</dbReference>
<dbReference type="PANTHER" id="PTHR11905">
    <property type="entry name" value="ADAM A DISINTEGRIN AND METALLOPROTEASE DOMAIN"/>
    <property type="match status" value="1"/>
</dbReference>
<dbReference type="PANTHER" id="PTHR11905:SF32">
    <property type="entry name" value="DISINTEGRIN AND METALLOPROTEINASE DOMAIN-CONTAINING PROTEIN 28"/>
    <property type="match status" value="1"/>
</dbReference>
<dbReference type="Pfam" id="PF00200">
    <property type="entry name" value="Disintegrin"/>
    <property type="match status" value="1"/>
</dbReference>
<dbReference type="Pfam" id="PF01562">
    <property type="entry name" value="Pep_M12B_propep"/>
    <property type="match status" value="1"/>
</dbReference>
<dbReference type="Pfam" id="PF01421">
    <property type="entry name" value="Reprolysin"/>
    <property type="match status" value="1"/>
</dbReference>
<dbReference type="PRINTS" id="PR00289">
    <property type="entry name" value="DISINTEGRIN"/>
</dbReference>
<dbReference type="SMART" id="SM00050">
    <property type="entry name" value="DISIN"/>
    <property type="match status" value="1"/>
</dbReference>
<dbReference type="SUPFAM" id="SSF57552">
    <property type="entry name" value="Blood coagulation inhibitor (disintegrin)"/>
    <property type="match status" value="1"/>
</dbReference>
<dbReference type="SUPFAM" id="SSF55486">
    <property type="entry name" value="Metalloproteases ('zincins'), catalytic domain"/>
    <property type="match status" value="1"/>
</dbReference>
<dbReference type="PROSITE" id="PS50215">
    <property type="entry name" value="ADAM_MEPRO"/>
    <property type="match status" value="1"/>
</dbReference>
<dbReference type="PROSITE" id="PS50214">
    <property type="entry name" value="DISINTEGRIN_2"/>
    <property type="match status" value="1"/>
</dbReference>
<dbReference type="PROSITE" id="PS00142">
    <property type="entry name" value="ZINC_PROTEASE"/>
    <property type="match status" value="1"/>
</dbReference>
<protein>
    <recommendedName>
        <fullName>Zinc metalloproteinase/disintegrin</fullName>
    </recommendedName>
    <component>
        <recommendedName>
            <fullName>Snake venom metalloproteinase aculysin-2</fullName>
            <shortName>SVMP</shortName>
            <ecNumber>3.4.24.-</ecNumber>
        </recommendedName>
        <alternativeName>
            <fullName>DaMD1</fullName>
        </alternativeName>
        <alternativeName>
            <fullName>Metalloproteinase MD1</fullName>
        </alternativeName>
    </component>
    <component>
        <recommendedName>
            <fullName>Disintegrin acugrin</fullName>
        </recommendedName>
    </component>
</protein>
<evidence type="ECO:0000250" key="1"/>
<evidence type="ECO:0000250" key="2">
    <source>
        <dbReference type="UniProtKB" id="Q0NZX5"/>
    </source>
</evidence>
<evidence type="ECO:0000250" key="3">
    <source>
        <dbReference type="UniProtKB" id="Q9PW35"/>
    </source>
</evidence>
<evidence type="ECO:0000255" key="4"/>
<evidence type="ECO:0000255" key="5">
    <source>
        <dbReference type="PROSITE-ProRule" id="PRU00068"/>
    </source>
</evidence>
<evidence type="ECO:0000255" key="6">
    <source>
        <dbReference type="PROSITE-ProRule" id="PRU00276"/>
    </source>
</evidence>
<evidence type="ECO:0000269" key="7">
    <source>
    </source>
</evidence>
<evidence type="ECO:0000305" key="8"/>
<evidence type="ECO:0000312" key="9">
    <source>
        <dbReference type="EMBL" id="CAB46430.1"/>
    </source>
</evidence>
<keyword id="KW-0106">Calcium</keyword>
<keyword id="KW-1217">Cell adhesion impairing toxin</keyword>
<keyword id="KW-0903">Direct protein sequencing</keyword>
<keyword id="KW-1015">Disulfide bond</keyword>
<keyword id="KW-1199">Hemostasis impairing toxin</keyword>
<keyword id="KW-0378">Hydrolase</keyword>
<keyword id="KW-0479">Metal-binding</keyword>
<keyword id="KW-0482">Metalloprotease</keyword>
<keyword id="KW-1201">Platelet aggregation inhibiting toxin</keyword>
<keyword id="KW-0645">Protease</keyword>
<keyword id="KW-0964">Secreted</keyword>
<keyword id="KW-0732">Signal</keyword>
<keyword id="KW-0800">Toxin</keyword>
<keyword id="KW-0862">Zinc</keyword>
<keyword id="KW-0865">Zymogen</keyword>
<name>VM2A2_DEIAC</name>
<sequence>MIQVLLVTICLAAFPYQGSSIILESGKVNDYEVVYPQRLAPLPEGAVQQKYEDTMQYEFKVNGEPVVLHLEKNKGLFSKDYSEIHYSPDGRRITTHPLVEDHCYYRGHIRNDADSTASISACHGLKGHFKLRGETYLIEPMKISNSEAHAVYKYENVEKEDEAHKMCGVTQNWESYEPIKKASQLIVSTEQQRYMEIVIVVDHSMVKKYNGDSDKIKAWVYEMINTITESYRYLYIDIILSGLEIWSEKDLINVETSAENTLKSFGEWRAKDLIHRISHDNAQLLTATDLDGPTIGLAYVASMCDPKRSVGIVQDHSSVNRLVAITLAHEMAHNLGVRHDEGSCSCGSGYTCIMSPVINPDAMKYFSDCSYIQCWDYIMKENPPCILNKPLRTDTVSTPVSGNELLEAGKDYDRDSSANPCYDAATCKLNQGAQCTAGPCCDQGRFKEEGTICRRARGDDLDDYCNGISADCPRNPYHA</sequence>
<reference evidence="9" key="1">
    <citation type="submission" date="1998-01" db="EMBL/GenBank/DDBJ databases">
        <title>Cloning and sequence analysis the cDNA of aculysin-2 from Agkistrodon acutus.</title>
        <authorList>
            <person name="Fan C.Y."/>
            <person name="Qian Y.C."/>
            <person name="Gong Y."/>
            <person name="Yang S.L."/>
        </authorList>
    </citation>
    <scope>NUCLEOTIDE SEQUENCE [MRNA]</scope>
    <source>
        <tissue evidence="9">Venom gland</tissue>
    </source>
</reference>
<reference evidence="9" key="2">
    <citation type="submission" date="1999-06" db="EMBL/GenBank/DDBJ databases">
        <title>Molecular cloning and sequence analysis of a cDNA encoding the precursor of platelet aggregation inhibitor and metalloproteinase from Agkistrodon acutus.</title>
        <authorList>
            <person name="Liu Q.D."/>
            <person name="Xu W.H."/>
            <person name="Cheng X."/>
            <person name="Liu J."/>
        </authorList>
    </citation>
    <scope>NUCLEOTIDE SEQUENCE [MRNA]</scope>
    <source>
        <tissue>Venom gland</tissue>
    </source>
</reference>
<reference key="3">
    <citation type="journal article" date="2000" name="Eur. J. Biochem.">
        <title>Purification, cloning and sequence analyses for pro-metalloprotease-disintegrin variants from Deinagkistrodon acutus venom and subclassification of the small venom metalloproteases.</title>
        <authorList>
            <person name="Tsai I.-H."/>
            <person name="Wang Y.-M."/>
            <person name="Chiang T.-Y."/>
            <person name="Chen Y.-L."/>
            <person name="Huang R.-J."/>
        </authorList>
    </citation>
    <scope>NUCLEOTIDE SEQUENCE [MRNA] OF 14-479</scope>
    <scope>PROTEIN SEQUENCE OF 428-444</scope>
    <scope>MASS SPECTROMETRY</scope>
    <source>
        <tissue>Venom</tissue>
        <tissue>Venom gland</tissue>
    </source>
</reference>
<reference evidence="9" key="4">
    <citation type="submission" date="1998-12" db="EMBL/GenBank/DDBJ databases">
        <title>Cloning and sequence analysis of the cDNA for metalloproteinase and disintegrin from the venom of Agkistrodon acutus.</title>
        <authorList>
            <person name="Fan C.Y."/>
            <person name="Qian Y.C."/>
            <person name="Gong Y."/>
            <person name="Yang S.L."/>
        </authorList>
    </citation>
    <scope>NUCLEOTIDE SEQUENCE [MRNA] OF 409-479</scope>
    <source>
        <tissue>Venom gland</tissue>
    </source>
</reference>
<gene>
    <name evidence="9" type="primary">wbfib4</name>
</gene>
<proteinExistence type="evidence at protein level"/>
<organism>
    <name type="scientific">Deinagkistrodon acutus</name>
    <name type="common">Hundred-pace snake</name>
    <name type="synonym">Agkistrodon acutus</name>
    <dbReference type="NCBI Taxonomy" id="36307"/>
    <lineage>
        <taxon>Eukaryota</taxon>
        <taxon>Metazoa</taxon>
        <taxon>Chordata</taxon>
        <taxon>Craniata</taxon>
        <taxon>Vertebrata</taxon>
        <taxon>Euteleostomi</taxon>
        <taxon>Lepidosauria</taxon>
        <taxon>Squamata</taxon>
        <taxon>Bifurcata</taxon>
        <taxon>Unidentata</taxon>
        <taxon>Episquamata</taxon>
        <taxon>Toxicofera</taxon>
        <taxon>Serpentes</taxon>
        <taxon>Colubroidea</taxon>
        <taxon>Viperidae</taxon>
        <taxon>Crotalinae</taxon>
        <taxon>Deinagkistrodon</taxon>
    </lineage>
</organism>
<accession>Q9PWJ0</accession>
<accession>Q9IAX7</accession>
<accession>Q9PW78</accession>
<accession>Q9YH68</accession>